<accession>C3LC72</accession>
<evidence type="ECO:0000255" key="1">
    <source>
        <dbReference type="HAMAP-Rule" id="MF_00197"/>
    </source>
</evidence>
<dbReference type="EC" id="5.1.1.7" evidence="1"/>
<dbReference type="EMBL" id="CP001215">
    <property type="protein sequence ID" value="ACP15377.1"/>
    <property type="molecule type" value="Genomic_DNA"/>
</dbReference>
<dbReference type="RefSeq" id="WP_000077386.1">
    <property type="nucleotide sequence ID" value="NC_012581.1"/>
</dbReference>
<dbReference type="SMR" id="C3LC72"/>
<dbReference type="GeneID" id="93006147"/>
<dbReference type="KEGG" id="bah:BAMEG_5228"/>
<dbReference type="HOGENOM" id="CLU_053306_3_0_9"/>
<dbReference type="UniPathway" id="UPA00034">
    <property type="reaction ID" value="UER00025"/>
</dbReference>
<dbReference type="GO" id="GO:0005829">
    <property type="term" value="C:cytosol"/>
    <property type="evidence" value="ECO:0007669"/>
    <property type="project" value="TreeGrafter"/>
</dbReference>
<dbReference type="GO" id="GO:0008837">
    <property type="term" value="F:diaminopimelate epimerase activity"/>
    <property type="evidence" value="ECO:0007669"/>
    <property type="project" value="UniProtKB-UniRule"/>
</dbReference>
<dbReference type="GO" id="GO:0009089">
    <property type="term" value="P:lysine biosynthetic process via diaminopimelate"/>
    <property type="evidence" value="ECO:0007669"/>
    <property type="project" value="UniProtKB-UniRule"/>
</dbReference>
<dbReference type="FunFam" id="3.10.310.10:FF:000004">
    <property type="entry name" value="Diaminopimelate epimerase"/>
    <property type="match status" value="1"/>
</dbReference>
<dbReference type="FunFam" id="3.10.310.10:FF:000006">
    <property type="entry name" value="Diaminopimelate epimerase"/>
    <property type="match status" value="1"/>
</dbReference>
<dbReference type="Gene3D" id="3.10.310.10">
    <property type="entry name" value="Diaminopimelate Epimerase, Chain A, domain 1"/>
    <property type="match status" value="2"/>
</dbReference>
<dbReference type="HAMAP" id="MF_00197">
    <property type="entry name" value="DAP_epimerase"/>
    <property type="match status" value="1"/>
</dbReference>
<dbReference type="InterPro" id="IPR018510">
    <property type="entry name" value="DAP_epimerase_AS"/>
</dbReference>
<dbReference type="InterPro" id="IPR001653">
    <property type="entry name" value="DAP_epimerase_DapF"/>
</dbReference>
<dbReference type="NCBIfam" id="TIGR00652">
    <property type="entry name" value="DapF"/>
    <property type="match status" value="1"/>
</dbReference>
<dbReference type="PANTHER" id="PTHR31689:SF0">
    <property type="entry name" value="DIAMINOPIMELATE EPIMERASE"/>
    <property type="match status" value="1"/>
</dbReference>
<dbReference type="PANTHER" id="PTHR31689">
    <property type="entry name" value="DIAMINOPIMELATE EPIMERASE, CHLOROPLASTIC"/>
    <property type="match status" value="1"/>
</dbReference>
<dbReference type="Pfam" id="PF01678">
    <property type="entry name" value="DAP_epimerase"/>
    <property type="match status" value="2"/>
</dbReference>
<dbReference type="SUPFAM" id="SSF54506">
    <property type="entry name" value="Diaminopimelate epimerase-like"/>
    <property type="match status" value="1"/>
</dbReference>
<dbReference type="PROSITE" id="PS01326">
    <property type="entry name" value="DAP_EPIMERASE"/>
    <property type="match status" value="1"/>
</dbReference>
<proteinExistence type="inferred from homology"/>
<sequence>MSQFSFTKMHGLGNSYIYVNMFEEQIPEEDLALVAEKVSNINTGIGADGMILICPSDVAPVKMRMFNNDGSEGKSCGNGLRCVAKYAYEHKLVEDTVFTIETLAGIVTAEVTVEEGKVTLAKIDMGAPRLTRAEIPMLGEGETPFIRENFLYNNHRYAFTAVSMGNPHAVIFVDDVEQAPLTTLGPVLETHEMFPERVNVEFIEILNEEEMNFRVWERGSGVTQACGTGACAAVVASILNGKMERGKEITVHLAGGDLMIAWTEEGNVLMKGPAEVICRGVYEYKIEA</sequence>
<organism>
    <name type="scientific">Bacillus anthracis (strain CDC 684 / NRRL 3495)</name>
    <dbReference type="NCBI Taxonomy" id="568206"/>
    <lineage>
        <taxon>Bacteria</taxon>
        <taxon>Bacillati</taxon>
        <taxon>Bacillota</taxon>
        <taxon>Bacilli</taxon>
        <taxon>Bacillales</taxon>
        <taxon>Bacillaceae</taxon>
        <taxon>Bacillus</taxon>
        <taxon>Bacillus cereus group</taxon>
    </lineage>
</organism>
<comment type="function">
    <text evidence="1">Catalyzes the stereoinversion of LL-2,6-diaminopimelate (L,L-DAP) to meso-diaminopimelate (meso-DAP), a precursor of L-lysine and an essential component of the bacterial peptidoglycan.</text>
</comment>
<comment type="catalytic activity">
    <reaction evidence="1">
        <text>(2S,6S)-2,6-diaminopimelate = meso-2,6-diaminopimelate</text>
        <dbReference type="Rhea" id="RHEA:15393"/>
        <dbReference type="ChEBI" id="CHEBI:57609"/>
        <dbReference type="ChEBI" id="CHEBI:57791"/>
        <dbReference type="EC" id="5.1.1.7"/>
    </reaction>
</comment>
<comment type="pathway">
    <text evidence="1">Amino-acid biosynthesis; L-lysine biosynthesis via DAP pathway; DL-2,6-diaminopimelate from LL-2,6-diaminopimelate: step 1/1.</text>
</comment>
<comment type="subunit">
    <text evidence="1">Homodimer.</text>
</comment>
<comment type="subcellular location">
    <subcellularLocation>
        <location evidence="1">Cytoplasm</location>
    </subcellularLocation>
</comment>
<comment type="similarity">
    <text evidence="1">Belongs to the diaminopimelate epimerase family.</text>
</comment>
<reference key="1">
    <citation type="submission" date="2008-10" db="EMBL/GenBank/DDBJ databases">
        <title>Genome sequence of Bacillus anthracis str. CDC 684.</title>
        <authorList>
            <person name="Dodson R.J."/>
            <person name="Munk A.C."/>
            <person name="Brettin T."/>
            <person name="Bruce D."/>
            <person name="Detter C."/>
            <person name="Tapia R."/>
            <person name="Han C."/>
            <person name="Sutton G."/>
            <person name="Sims D."/>
        </authorList>
    </citation>
    <scope>NUCLEOTIDE SEQUENCE [LARGE SCALE GENOMIC DNA]</scope>
    <source>
        <strain>CDC 684 / NRRL 3495</strain>
    </source>
</reference>
<feature type="chain" id="PRO_1000124400" description="Diaminopimelate epimerase">
    <location>
        <begin position="1"/>
        <end position="288"/>
    </location>
</feature>
<feature type="active site" description="Proton donor" evidence="1">
    <location>
        <position position="76"/>
    </location>
</feature>
<feature type="active site" description="Proton acceptor" evidence="1">
    <location>
        <position position="226"/>
    </location>
</feature>
<feature type="binding site" evidence="1">
    <location>
        <position position="14"/>
    </location>
    <ligand>
        <name>substrate</name>
    </ligand>
</feature>
<feature type="binding site" evidence="1">
    <location>
        <position position="67"/>
    </location>
    <ligand>
        <name>substrate</name>
    </ligand>
</feature>
<feature type="binding site" evidence="1">
    <location>
        <begin position="77"/>
        <end position="78"/>
    </location>
    <ligand>
        <name>substrate</name>
    </ligand>
</feature>
<feature type="binding site" evidence="1">
    <location>
        <position position="166"/>
    </location>
    <ligand>
        <name>substrate</name>
    </ligand>
</feature>
<feature type="binding site" evidence="1">
    <location>
        <position position="199"/>
    </location>
    <ligand>
        <name>substrate</name>
    </ligand>
</feature>
<feature type="binding site" evidence="1">
    <location>
        <begin position="217"/>
        <end position="218"/>
    </location>
    <ligand>
        <name>substrate</name>
    </ligand>
</feature>
<feature type="binding site" evidence="1">
    <location>
        <begin position="227"/>
        <end position="228"/>
    </location>
    <ligand>
        <name>substrate</name>
    </ligand>
</feature>
<feature type="site" description="Could be important to modulate the pK values of the two catalytic cysteine residues" evidence="1">
    <location>
        <position position="168"/>
    </location>
</feature>
<feature type="site" description="Could be important to modulate the pK values of the two catalytic cysteine residues" evidence="1">
    <location>
        <position position="217"/>
    </location>
</feature>
<protein>
    <recommendedName>
        <fullName evidence="1">Diaminopimelate epimerase</fullName>
        <shortName evidence="1">DAP epimerase</shortName>
        <ecNumber evidence="1">5.1.1.7</ecNumber>
    </recommendedName>
    <alternativeName>
        <fullName evidence="1">PLP-independent amino acid racemase</fullName>
    </alternativeName>
</protein>
<gene>
    <name evidence="1" type="primary">dapF</name>
    <name type="ordered locus">BAMEG_5228</name>
</gene>
<keyword id="KW-0028">Amino-acid biosynthesis</keyword>
<keyword id="KW-0963">Cytoplasm</keyword>
<keyword id="KW-0413">Isomerase</keyword>
<keyword id="KW-0457">Lysine biosynthesis</keyword>
<name>DAPF_BACAC</name>